<proteinExistence type="inferred from homology"/>
<name>RL4_METST</name>
<gene>
    <name evidence="1" type="primary">rpl4</name>
    <name type="ordered locus">Msp_0908</name>
</gene>
<reference key="1">
    <citation type="journal article" date="2006" name="J. Bacteriol.">
        <title>The genome sequence of Methanosphaera stadtmanae reveals why this human intestinal archaeon is restricted to methanol and H2 for methane formation and ATP synthesis.</title>
        <authorList>
            <person name="Fricke W.F."/>
            <person name="Seedorf H."/>
            <person name="Henne A."/>
            <person name="Kruer M."/>
            <person name="Liesegang H."/>
            <person name="Hedderich R."/>
            <person name="Gottschalk G."/>
            <person name="Thauer R.K."/>
        </authorList>
    </citation>
    <scope>NUCLEOTIDE SEQUENCE [LARGE SCALE GENOMIC DNA]</scope>
    <source>
        <strain>ATCC 43021 / DSM 3091 / JCM 11832 / MCB-3</strain>
    </source>
</reference>
<sequence length="259" mass="28590">MAKINVYSLKGDITEEIELPEIFEEEYRPDVIKRAVISMQTARIQPWGTDPMAGKRTTAESFGSGRGAAMVPRVKGSSKAAFVPQAIGGRKAHPPRVNTIYHEKINKKERTLAIRSAIAATANKELVEQRGHQVSELEQIPFVIDDEIETVKTTKETREIFKDLGIMDDIVRAKKGRKIKSGKGKLRGRKYRTPKGPLVVVGNDRGISLGARNHAGVDVVEVNNINAELLAPGTHAGRLTIYTKSAIEKLGDLFQKNRS</sequence>
<accession>Q2NFV7</accession>
<protein>
    <recommendedName>
        <fullName evidence="1">Large ribosomal subunit protein uL4</fullName>
    </recommendedName>
    <alternativeName>
        <fullName evidence="3">50S ribosomal protein L4</fullName>
    </alternativeName>
</protein>
<organism>
    <name type="scientific">Methanosphaera stadtmanae (strain ATCC 43021 / DSM 3091 / JCM 11832 / MCB-3)</name>
    <dbReference type="NCBI Taxonomy" id="339860"/>
    <lineage>
        <taxon>Archaea</taxon>
        <taxon>Methanobacteriati</taxon>
        <taxon>Methanobacteriota</taxon>
        <taxon>Methanomada group</taxon>
        <taxon>Methanobacteria</taxon>
        <taxon>Methanobacteriales</taxon>
        <taxon>Methanobacteriaceae</taxon>
        <taxon>Methanosphaera</taxon>
    </lineage>
</organism>
<dbReference type="EMBL" id="CP000102">
    <property type="protein sequence ID" value="ABC57296.1"/>
    <property type="molecule type" value="Genomic_DNA"/>
</dbReference>
<dbReference type="SMR" id="Q2NFV7"/>
<dbReference type="STRING" id="339860.Msp_0908"/>
<dbReference type="KEGG" id="mst:Msp_0908"/>
<dbReference type="eggNOG" id="arCOG04071">
    <property type="taxonomic scope" value="Archaea"/>
</dbReference>
<dbReference type="HOGENOM" id="CLU_026535_0_0_2"/>
<dbReference type="OrthoDB" id="10737at2157"/>
<dbReference type="Proteomes" id="UP000001931">
    <property type="component" value="Chromosome"/>
</dbReference>
<dbReference type="GO" id="GO:1990904">
    <property type="term" value="C:ribonucleoprotein complex"/>
    <property type="evidence" value="ECO:0007669"/>
    <property type="project" value="UniProtKB-KW"/>
</dbReference>
<dbReference type="GO" id="GO:0005840">
    <property type="term" value="C:ribosome"/>
    <property type="evidence" value="ECO:0007669"/>
    <property type="project" value="UniProtKB-KW"/>
</dbReference>
<dbReference type="GO" id="GO:0019843">
    <property type="term" value="F:rRNA binding"/>
    <property type="evidence" value="ECO:0007669"/>
    <property type="project" value="UniProtKB-UniRule"/>
</dbReference>
<dbReference type="GO" id="GO:0003735">
    <property type="term" value="F:structural constituent of ribosome"/>
    <property type="evidence" value="ECO:0007669"/>
    <property type="project" value="InterPro"/>
</dbReference>
<dbReference type="GO" id="GO:0006412">
    <property type="term" value="P:translation"/>
    <property type="evidence" value="ECO:0007669"/>
    <property type="project" value="UniProtKB-UniRule"/>
</dbReference>
<dbReference type="FunFam" id="3.40.1370.10:FF:000011">
    <property type="entry name" value="50S ribosomal protein L4"/>
    <property type="match status" value="1"/>
</dbReference>
<dbReference type="Gene3D" id="3.40.1370.10">
    <property type="match status" value="1"/>
</dbReference>
<dbReference type="HAMAP" id="MF_01328_A">
    <property type="entry name" value="Ribosomal_uL4_A"/>
    <property type="match status" value="1"/>
</dbReference>
<dbReference type="InterPro" id="IPR002136">
    <property type="entry name" value="Ribosomal_uL4"/>
</dbReference>
<dbReference type="InterPro" id="IPR023574">
    <property type="entry name" value="Ribosomal_uL4_dom_sf"/>
</dbReference>
<dbReference type="InterPro" id="IPR013000">
    <property type="entry name" value="Ribosomal_uL4_euk/arc_CS"/>
</dbReference>
<dbReference type="InterPro" id="IPR045240">
    <property type="entry name" value="Ribosomal_uL4_euk/arch"/>
</dbReference>
<dbReference type="InterPro" id="IPR019970">
    <property type="entry name" value="Ribosomall_uL4-arc"/>
</dbReference>
<dbReference type="NCBIfam" id="TIGR03672">
    <property type="entry name" value="rpl4p_arch"/>
    <property type="match status" value="1"/>
</dbReference>
<dbReference type="PANTHER" id="PTHR19431">
    <property type="entry name" value="60S RIBOSOMAL PROTEIN L4"/>
    <property type="match status" value="1"/>
</dbReference>
<dbReference type="Pfam" id="PF00573">
    <property type="entry name" value="Ribosomal_L4"/>
    <property type="match status" value="1"/>
</dbReference>
<dbReference type="SUPFAM" id="SSF52166">
    <property type="entry name" value="Ribosomal protein L4"/>
    <property type="match status" value="1"/>
</dbReference>
<dbReference type="PROSITE" id="PS00939">
    <property type="entry name" value="RIBOSOMAL_L1E"/>
    <property type="match status" value="1"/>
</dbReference>
<evidence type="ECO:0000255" key="1">
    <source>
        <dbReference type="HAMAP-Rule" id="MF_01328"/>
    </source>
</evidence>
<evidence type="ECO:0000256" key="2">
    <source>
        <dbReference type="SAM" id="MobiDB-lite"/>
    </source>
</evidence>
<evidence type="ECO:0000305" key="3"/>
<keyword id="KW-1185">Reference proteome</keyword>
<keyword id="KW-0687">Ribonucleoprotein</keyword>
<keyword id="KW-0689">Ribosomal protein</keyword>
<keyword id="KW-0694">RNA-binding</keyword>
<keyword id="KW-0699">rRNA-binding</keyword>
<feature type="chain" id="PRO_0000242468" description="Large ribosomal subunit protein uL4">
    <location>
        <begin position="1"/>
        <end position="259"/>
    </location>
</feature>
<feature type="region of interest" description="Disordered" evidence="2">
    <location>
        <begin position="47"/>
        <end position="67"/>
    </location>
</feature>
<comment type="function">
    <text evidence="1">One of the primary rRNA binding proteins, this protein initially binds near the 5'-end of the 23S rRNA. It is important during the early stages of 50S assembly. It makes multiple contacts with different domains of the 23S rRNA in the assembled 50S subunit and ribosome.</text>
</comment>
<comment type="function">
    <text evidence="1">Forms part of the polypeptide exit tunnel.</text>
</comment>
<comment type="subunit">
    <text evidence="1">Part of the 50S ribosomal subunit.</text>
</comment>
<comment type="similarity">
    <text evidence="1">Belongs to the universal ribosomal protein uL4 family.</text>
</comment>